<reference key="1">
    <citation type="journal article" date="1990" name="Virology">
        <title>Molecular cloning and nucleotide sequence of hog cholera virus strain Brescia and mapping of the genomic region encoding envelope protein E1.</title>
        <authorList>
            <person name="Moormann R.J.M."/>
            <person name="Warmerdam P.A.M."/>
            <person name="van der Meer B."/>
            <person name="Schaaper W.M.M."/>
            <person name="Wensvoort G."/>
            <person name="Hulst M.M."/>
        </authorList>
    </citation>
    <scope>NUCLEOTIDE SEQUENCE [GENOMIC RNA]</scope>
</reference>
<reference key="2">
    <citation type="journal article" date="1998" name="J. Virol.">
        <title>Specific interaction of eukaryotic translation initiation factor 3 with the 5' nontranslated regions of hepatitis C virus and classical swine fever virus RNAs.</title>
        <authorList>
            <person name="Sizova D.V."/>
            <person name="Kolupaeva V.G."/>
            <person name="Pestova T.V."/>
            <person name="Shatsky I.N."/>
            <person name="Hellen C.U."/>
        </authorList>
    </citation>
    <scope>INDUCTION</scope>
</reference>
<reference key="3">
    <citation type="journal article" date="2000" name="J. Virol.">
        <title>Passage of classical swine fever virus in cultured swine kidney cells selects virus variants that bind to heparan sulfate due to a single amino acid change in envelope protein E(rns).</title>
        <authorList>
            <person name="Hulst M.M."/>
            <person name="van Gennip H.G."/>
            <person name="Moormann R.J."/>
        </authorList>
    </citation>
    <scope>FUNCTION</scope>
    <scope>MUTAGENESIS OF ARG-476</scope>
    <source>
        <strain evidence="17">Brescia</strain>
    </source>
</reference>
<reference key="4">
    <citation type="journal article" date="2015" name="Virus Res.">
        <title>Annexin 2 is a host protein binding to classical swine fever virus E2 glycoprotein and promoting viral growth in PK-15 cells.</title>
        <authorList>
            <person name="Yang Z."/>
            <person name="Shi Z."/>
            <person name="Guo H."/>
            <person name="Qu H."/>
            <person name="Zhang Y."/>
            <person name="Tu C."/>
        </authorList>
    </citation>
    <scope>FUNCTION</scope>
    <scope>INTERACTION WITH PIG ANXA2</scope>
    <source>
        <strain evidence="18">Shimen</strain>
    </source>
</reference>
<reference key="5">
    <citation type="journal article" date="2020" name="Emerg. Microbes Infect.">
        <title>MERTK is a host factor that promotes classical swine fever virus entry and antagonizes innate immune response in PK-15 cells.</title>
        <authorList>
            <person name="Zheng G."/>
            <person name="Li L.F."/>
            <person name="Zhang Y."/>
            <person name="Qu L."/>
            <person name="Wang W."/>
            <person name="Li M."/>
            <person name="Yu S."/>
            <person name="Zhou M."/>
            <person name="Luo Y."/>
            <person name="Sun Y."/>
            <person name="Munir M."/>
            <person name="Li S."/>
            <person name="Qiu H.J."/>
        </authorList>
    </citation>
    <scope>FUNCTION</scope>
    <scope>INTERACTION WITH PIG MERTK</scope>
    <source>
        <strain evidence="19">Shimen</strain>
    </source>
</reference>
<feature type="chain" id="PRO_0000450894" description="Genome polyprotein">
    <location>
        <begin position="1"/>
        <end position="3898"/>
    </location>
</feature>
<feature type="chain" id="PRO_0000038062" description="N-terminal protease" evidence="1">
    <location>
        <begin position="1"/>
        <end position="168"/>
    </location>
</feature>
<feature type="chain" id="PRO_0000038063" description="Capsid protein C" evidence="1">
    <location>
        <begin position="169"/>
        <end position="267"/>
    </location>
</feature>
<feature type="chain" id="PRO_0000038064" description="E(rns) glycoprotein" evidence="1">
    <location>
        <begin position="268"/>
        <end position="494"/>
    </location>
</feature>
<feature type="chain" id="PRO_0000038065" description="Envelope glycoprotein E1" evidence="1">
    <location>
        <begin position="495"/>
        <end position="689"/>
    </location>
</feature>
<feature type="chain" id="PRO_0000038066" description="Envelope glycoprotein E2" evidence="1">
    <location>
        <begin position="690"/>
        <end position="1062"/>
    </location>
</feature>
<feature type="chain" id="PRO_0000038067" description="Viroporin p7" evidence="1">
    <location>
        <begin position="1063"/>
        <end position="1132"/>
    </location>
</feature>
<feature type="chain" id="PRO_0000038068" description="Non-structural protein 2-3" evidence="1">
    <location>
        <begin position="1133"/>
        <end position="2272"/>
    </location>
</feature>
<feature type="chain" id="PRO_0000349362" description="Cysteine protease NS2" evidence="10">
    <location>
        <begin position="1133"/>
        <end position="1589"/>
    </location>
</feature>
<feature type="chain" id="PRO_0000038069" description="Serine protease NS3" evidence="1">
    <location>
        <begin position="1590"/>
        <end position="2272"/>
    </location>
</feature>
<feature type="chain" id="PRO_0000038070" description="Non-structural protein 4A" evidence="1">
    <location>
        <begin position="2273"/>
        <end position="2336"/>
    </location>
</feature>
<feature type="chain" id="PRO_0000038071" description="Non-structural protein 4B" evidence="1">
    <location>
        <begin position="2337"/>
        <end position="2683"/>
    </location>
</feature>
<feature type="chain" id="PRO_0000038072" description="Non-structural protein 5A" evidence="1">
    <location>
        <begin position="2684"/>
        <end position="3180"/>
    </location>
</feature>
<feature type="chain" id="PRO_0000038073" description="RNA-directed RNA polymerase" evidence="1">
    <location>
        <begin position="3181"/>
        <end position="3898"/>
    </location>
</feature>
<feature type="transmembrane region" description="Helical" evidence="5">
    <location>
        <begin position="1031"/>
        <end position="1051"/>
    </location>
</feature>
<feature type="transmembrane region" description="Helical" evidence="5">
    <location>
        <begin position="1070"/>
        <end position="1090"/>
    </location>
</feature>
<feature type="transmembrane region" description="Helical" evidence="5">
    <location>
        <begin position="1104"/>
        <end position="1124"/>
    </location>
</feature>
<feature type="transmembrane region" description="Helical" evidence="10">
    <location>
        <begin position="1140"/>
        <end position="1164"/>
    </location>
</feature>
<feature type="transmembrane region" description="Helical" evidence="10">
    <location>
        <begin position="1189"/>
        <end position="1209"/>
    </location>
</feature>
<feature type="transmembrane region" description="Helical" evidence="10">
    <location>
        <begin position="1217"/>
        <end position="1237"/>
    </location>
</feature>
<feature type="transmembrane region" description="Helical" evidence="10">
    <location>
        <begin position="1247"/>
        <end position="1267"/>
    </location>
</feature>
<feature type="transmembrane region" description="Helical" evidence="10">
    <location>
        <begin position="1281"/>
        <end position="1301"/>
    </location>
</feature>
<feature type="transmembrane region" description="Helical" evidence="10">
    <location>
        <begin position="1360"/>
        <end position="1380"/>
    </location>
</feature>
<feature type="transmembrane region" description="Helical" evidence="10">
    <location>
        <begin position="1568"/>
        <end position="1588"/>
    </location>
</feature>
<feature type="domain" description="Peptidase C53" evidence="11">
    <location>
        <begin position="1"/>
        <end position="168"/>
    </location>
</feature>
<feature type="domain" description="Peptidase C74" evidence="10">
    <location>
        <begin position="1441"/>
        <end position="1589"/>
    </location>
</feature>
<feature type="domain" description="Peptidase S31" evidence="9">
    <location>
        <begin position="1590"/>
        <end position="1763"/>
    </location>
</feature>
<feature type="domain" description="Helicase ATP-binding" evidence="7">
    <location>
        <begin position="1802"/>
        <end position="1960"/>
    </location>
</feature>
<feature type="domain" description="Helicase C-terminal" evidence="8">
    <location>
        <begin position="1978"/>
        <end position="2179"/>
    </location>
</feature>
<feature type="domain" description="RdRp catalytic" evidence="6">
    <location>
        <begin position="3519"/>
        <end position="3642"/>
    </location>
</feature>
<feature type="region of interest" description="Zinc-binding TRASH domain" evidence="3">
    <location>
        <begin position="112"/>
        <end position="138"/>
    </location>
</feature>
<feature type="region of interest" description="Disordered" evidence="12">
    <location>
        <begin position="221"/>
        <end position="242"/>
    </location>
</feature>
<feature type="region of interest" description="Disordered" evidence="12">
    <location>
        <begin position="2968"/>
        <end position="2987"/>
    </location>
</feature>
<feature type="short sequence motif" description="DEAH box" evidence="7">
    <location>
        <begin position="1910"/>
        <end position="1913"/>
    </location>
</feature>
<feature type="compositionally biased region" description="Low complexity" evidence="12">
    <location>
        <begin position="2968"/>
        <end position="2980"/>
    </location>
</feature>
<feature type="active site" description="For N-terminal protease activity" evidence="3">
    <location>
        <position position="22"/>
    </location>
</feature>
<feature type="active site" description="For N-terminal protease activity" evidence="11">
    <location>
        <position position="49"/>
    </location>
</feature>
<feature type="active site" description="For N-terminal protease activity" evidence="11">
    <location>
        <position position="69"/>
    </location>
</feature>
<feature type="active site" description="For cysteine protease NS2 activity" evidence="10">
    <location>
        <position position="1447"/>
    </location>
</feature>
<feature type="active site" description="For cysteine protease NS2 activity" evidence="10">
    <location>
        <position position="1461"/>
    </location>
</feature>
<feature type="active site" description="For cysteine protease NS2 activity" evidence="10">
    <location>
        <position position="1512"/>
    </location>
</feature>
<feature type="active site" description="Charge relay system; for serine protease NS3 activity" evidence="9">
    <location>
        <position position="1658"/>
    </location>
</feature>
<feature type="active site" description="Charge relay system; for serine protease NS3 activity" evidence="9">
    <location>
        <position position="1695"/>
    </location>
</feature>
<feature type="active site" description="Charge relay system; for serine protease NS3 activity" evidence="9">
    <location>
        <position position="1752"/>
    </location>
</feature>
<feature type="binding site" evidence="7">
    <location>
        <begin position="1815"/>
        <end position="1822"/>
    </location>
    <ligand>
        <name>ATP</name>
        <dbReference type="ChEBI" id="CHEBI:30616"/>
    </ligand>
</feature>
<feature type="binding site" evidence="2">
    <location>
        <position position="3500"/>
    </location>
    <ligand>
        <name>GTP</name>
        <dbReference type="ChEBI" id="CHEBI:37565"/>
    </ligand>
</feature>
<feature type="binding site" evidence="2">
    <location>
        <position position="3502"/>
    </location>
    <ligand>
        <name>GTP</name>
        <dbReference type="ChEBI" id="CHEBI:37565"/>
    </ligand>
</feature>
<feature type="binding site" evidence="2">
    <location>
        <position position="3697"/>
    </location>
    <ligand>
        <name>GTP</name>
        <dbReference type="ChEBI" id="CHEBI:37565"/>
    </ligand>
</feature>
<feature type="binding site" evidence="2">
    <location>
        <position position="3705"/>
    </location>
    <ligand>
        <name>GTP</name>
        <dbReference type="ChEBI" id="CHEBI:37565"/>
    </ligand>
</feature>
<feature type="site" description="Cleavage; by autolysis" evidence="11">
    <location>
        <begin position="168"/>
        <end position="169"/>
    </location>
</feature>
<feature type="site" description="Cleavage; by host signal peptidase" evidence="3">
    <location>
        <begin position="267"/>
        <end position="268"/>
    </location>
</feature>
<feature type="site" description="Hydrogen donor to release the cleavage products of E(rns) glycoprotein RNase activity" evidence="4">
    <location>
        <position position="297"/>
    </location>
</feature>
<feature type="site" description="Cleavage" evidence="3">
    <location>
        <begin position="494"/>
        <end position="495"/>
    </location>
</feature>
<feature type="site" description="Cleavage; by host signal peptidase" evidence="3">
    <location>
        <begin position="689"/>
        <end position="690"/>
    </location>
</feature>
<feature type="site" description="Serves as pH sensor to control fusion" evidence="2">
    <location>
        <position position="759"/>
    </location>
</feature>
<feature type="site" description="Cleavage; by host signal peptidase; partial" evidence="1">
    <location>
        <begin position="1062"/>
        <end position="1063"/>
    </location>
</feature>
<feature type="site" description="Cleavage; by host signal peptidase" evidence="1">
    <location>
        <begin position="1132"/>
        <end position="1133"/>
    </location>
</feature>
<feature type="site" description="Cleavage; partial; by cysteine protease NS2" evidence="1">
    <location>
        <begin position="1589"/>
        <end position="1590"/>
    </location>
</feature>
<feature type="site" description="Cleavage; by serine protease NS3" evidence="1">
    <location>
        <begin position="2272"/>
        <end position="2273"/>
    </location>
</feature>
<feature type="site" description="Cleavage; by serine protease NS3" evidence="1">
    <location>
        <begin position="2336"/>
        <end position="2337"/>
    </location>
</feature>
<feature type="site" description="Cleavage; by serine protease NS3" evidence="1">
    <location>
        <begin position="2683"/>
        <end position="2684"/>
    </location>
</feature>
<feature type="site" description="Cleavage; by serine protease NS3" evidence="1">
    <location>
        <begin position="3180"/>
        <end position="3181"/>
    </location>
</feature>
<feature type="glycosylation site" description="N-linked (GlcNAc...) asparagine; by host" evidence="5">
    <location>
        <position position="157"/>
    </location>
</feature>
<feature type="glycosylation site" description="N-linked (GlcNAc...) asparagine; by host" evidence="5">
    <location>
        <position position="269"/>
    </location>
</feature>
<feature type="glycosylation site" description="N-linked (GlcNAc...) asparagine; by host" evidence="5">
    <location>
        <position position="278"/>
    </location>
</feature>
<feature type="glycosylation site" description="N-linked (GlcNAc...) asparagine; by host" evidence="5">
    <location>
        <position position="332"/>
    </location>
</feature>
<feature type="glycosylation site" description="N-linked (GlcNAc...) asparagine; by host" evidence="5">
    <location>
        <position position="362"/>
    </location>
</feature>
<feature type="glycosylation site" description="N-linked (GlcNAc...) asparagine; by host" evidence="5">
    <location>
        <position position="367"/>
    </location>
</feature>
<feature type="glycosylation site" description="N-linked (GlcNAc...) asparagine; by host" evidence="5">
    <location>
        <position position="410"/>
    </location>
</feature>
<feature type="glycosylation site" description="N-linked (GlcNAc...) asparagine; by host" evidence="5">
    <location>
        <position position="425"/>
    </location>
</feature>
<feature type="glycosylation site" description="N-linked (GlcNAc...) asparagine; by host" evidence="5">
    <location>
        <position position="500"/>
    </location>
</feature>
<feature type="glycosylation site" description="N-linked (GlcNAc...) asparagine; by host" evidence="5">
    <location>
        <position position="594"/>
    </location>
</feature>
<feature type="glycosylation site" description="N-linked (GlcNAc...) asparagine; by host" evidence="5">
    <location>
        <position position="805"/>
    </location>
</feature>
<feature type="glycosylation site" description="N-linked (GlcNAc...) asparagine; by host" evidence="5">
    <location>
        <position position="810"/>
    </location>
</feature>
<feature type="glycosylation site" description="N-linked (GlcNAc...) asparagine; by host" evidence="5">
    <location>
        <position position="874"/>
    </location>
</feature>
<feature type="glycosylation site" description="N-linked (GlcNAc...) asparagine; by host" evidence="5">
    <location>
        <position position="918"/>
    </location>
</feature>
<feature type="glycosylation site" description="N-linked (GlcNAc...) asparagine; by host" evidence="5">
    <location>
        <position position="949"/>
    </location>
</feature>
<feature type="glycosylation site" description="N-linked (GlcNAc...) asparagine; by host" evidence="5">
    <location>
        <position position="1713"/>
    </location>
</feature>
<feature type="glycosylation site" description="N-linked (GlcNAc...) asparagine; by host" evidence="5">
    <location>
        <position position="2134"/>
    </location>
</feature>
<feature type="glycosylation site" description="N-linked (GlcNAc...) asparagine; by host" evidence="5">
    <location>
        <position position="2217"/>
    </location>
</feature>
<feature type="glycosylation site" description="N-linked (GlcNAc...) asparagine; by host" evidence="5">
    <location>
        <position position="2419"/>
    </location>
</feature>
<feature type="glycosylation site" description="N-linked (GlcNAc...) asparagine; by host" evidence="5">
    <location>
        <position position="2494"/>
    </location>
</feature>
<feature type="glycosylation site" description="N-linked (GlcNAc...) asparagine; by host" evidence="5">
    <location>
        <position position="2787"/>
    </location>
</feature>
<feature type="glycosylation site" description="N-linked (GlcNAc...) asparagine; by host" evidence="5">
    <location>
        <position position="2815"/>
    </location>
</feature>
<feature type="glycosylation site" description="N-linked (GlcNAc...) asparagine; by host" evidence="5">
    <location>
        <position position="2891"/>
    </location>
</feature>
<feature type="glycosylation site" description="N-linked (GlcNAc...) asparagine; by host" evidence="5">
    <location>
        <position position="3103"/>
    </location>
</feature>
<feature type="glycosylation site" description="N-linked (GlcNAc...) asparagine; by host" evidence="5">
    <location>
        <position position="3211"/>
    </location>
</feature>
<feature type="glycosylation site" description="N-linked (GlcNAc...) asparagine; by host" evidence="5">
    <location>
        <position position="3316"/>
    </location>
</feature>
<feature type="glycosylation site" description="N-linked (GlcNAc...) asparagine; by host" evidence="5">
    <location>
        <position position="3689"/>
    </location>
</feature>
<feature type="glycosylation site" description="N-linked (GlcNAc...) asparagine; by host" evidence="5">
    <location>
        <position position="3698"/>
    </location>
</feature>
<feature type="glycosylation site" description="N-linked (GlcNAc...) asparagine; by host" evidence="5">
    <location>
        <position position="3794"/>
    </location>
</feature>
<feature type="disulfide bond" evidence="4">
    <location>
        <begin position="305"/>
        <end position="349"/>
    </location>
</feature>
<feature type="disulfide bond" evidence="4">
    <location>
        <begin position="335"/>
        <end position="336"/>
    </location>
</feature>
<feature type="disulfide bond" evidence="4">
    <location>
        <begin position="377"/>
        <end position="422"/>
    </location>
</feature>
<feature type="disulfide bond" evidence="4">
    <location>
        <begin position="381"/>
        <end position="405"/>
    </location>
</feature>
<feature type="disulfide bond" description="Interchain" evidence="3">
    <location>
        <position position="438"/>
    </location>
</feature>
<feature type="disulfide bond" evidence="2">
    <location>
        <begin position="693"/>
        <end position="737"/>
    </location>
</feature>
<feature type="disulfide bond" description="Interchain" evidence="2">
    <location>
        <position position="983"/>
    </location>
</feature>
<feature type="mutagenesis site" description="Reduces binding of E(rns) glycoprotein to heparan sulfate on the surface of host cells." evidence="13">
    <original>R</original>
    <variation>S</variation>
    <location>
        <position position="476"/>
    </location>
</feature>
<protein>
    <recommendedName>
        <fullName>Genome polyprotein</fullName>
    </recommendedName>
    <component>
        <recommendedName>
            <fullName>N-terminal protease</fullName>
            <shortName>N-pro</shortName>
            <ecNumber>3.4.22.-</ecNumber>
        </recommendedName>
        <alternativeName>
            <fullName>Autoprotease p20</fullName>
        </alternativeName>
    </component>
    <component>
        <recommendedName>
            <fullName>Capsid protein C</fullName>
        </recommendedName>
    </component>
    <component>
        <recommendedName>
            <fullName>E(rns) glycoprotein</fullName>
        </recommendedName>
        <alternativeName>
            <fullName>gp44/48</fullName>
        </alternativeName>
    </component>
    <component>
        <recommendedName>
            <fullName>Envelope glycoprotein E1</fullName>
        </recommendedName>
        <alternativeName>
            <fullName>gp33</fullName>
        </alternativeName>
    </component>
    <component>
        <recommendedName>
            <fullName>Envelope glycoprotein E2</fullName>
        </recommendedName>
        <alternativeName>
            <fullName>gp55</fullName>
        </alternativeName>
    </component>
    <component>
        <recommendedName>
            <fullName evidence="3">Viroporin p7</fullName>
        </recommendedName>
    </component>
    <component>
        <recommendedName>
            <fullName>Non-structural protein 2-3</fullName>
            <shortName>NS2-3</shortName>
        </recommendedName>
    </component>
    <component>
        <recommendedName>
            <fullName>Cysteine protease NS2</fullName>
            <ecNumber>3.4.22.-</ecNumber>
        </recommendedName>
        <alternativeName>
            <fullName>Non-structural protein 2</fullName>
        </alternativeName>
    </component>
    <component>
        <recommendedName>
            <fullName>Serine protease NS3</fullName>
            <ecNumber>3.4.21.113</ecNumber>
            <ecNumber>3.6.1.15</ecNumber>
            <ecNumber>3.6.4.13</ecNumber>
        </recommendedName>
        <alternativeName>
            <fullName>Non-structural protein 3</fullName>
        </alternativeName>
    </component>
    <component>
        <recommendedName>
            <fullName>Non-structural protein 4A</fullName>
            <shortName>NS4A</shortName>
        </recommendedName>
    </component>
    <component>
        <recommendedName>
            <fullName>Non-structural protein 4B</fullName>
            <shortName>NS4B</shortName>
        </recommendedName>
    </component>
    <component>
        <recommendedName>
            <fullName>Non-structural protein 5A</fullName>
            <shortName>NS5A</shortName>
        </recommendedName>
    </component>
    <component>
        <recommendedName>
            <fullName>RNA-directed RNA polymerase</fullName>
            <ecNumber>2.7.7.48</ecNumber>
        </recommendedName>
        <alternativeName>
            <fullName>NS5B</fullName>
        </alternativeName>
    </component>
</protein>
<accession>P21530</accession>
<proteinExistence type="evidence at protein level"/>
<evidence type="ECO:0000250" key="1"/>
<evidence type="ECO:0000250" key="2">
    <source>
        <dbReference type="UniProtKB" id="P19711"/>
    </source>
</evidence>
<evidence type="ECO:0000250" key="3">
    <source>
        <dbReference type="UniProtKB" id="P19712"/>
    </source>
</evidence>
<evidence type="ECO:0000250" key="4">
    <source>
        <dbReference type="UniProtKB" id="Q96662"/>
    </source>
</evidence>
<evidence type="ECO:0000255" key="5"/>
<evidence type="ECO:0000255" key="6">
    <source>
        <dbReference type="PROSITE-ProRule" id="PRU00539"/>
    </source>
</evidence>
<evidence type="ECO:0000255" key="7">
    <source>
        <dbReference type="PROSITE-ProRule" id="PRU00541"/>
    </source>
</evidence>
<evidence type="ECO:0000255" key="8">
    <source>
        <dbReference type="PROSITE-ProRule" id="PRU00542"/>
    </source>
</evidence>
<evidence type="ECO:0000255" key="9">
    <source>
        <dbReference type="PROSITE-ProRule" id="PRU00868"/>
    </source>
</evidence>
<evidence type="ECO:0000255" key="10">
    <source>
        <dbReference type="PROSITE-ProRule" id="PRU01029"/>
    </source>
</evidence>
<evidence type="ECO:0000255" key="11">
    <source>
        <dbReference type="PROSITE-ProRule" id="PRU01224"/>
    </source>
</evidence>
<evidence type="ECO:0000256" key="12">
    <source>
        <dbReference type="SAM" id="MobiDB-lite"/>
    </source>
</evidence>
<evidence type="ECO:0000269" key="13">
    <source>
    </source>
</evidence>
<evidence type="ECO:0000269" key="14">
    <source>
    </source>
</evidence>
<evidence type="ECO:0000269" key="15">
    <source>
    </source>
</evidence>
<evidence type="ECO:0000269" key="16">
    <source>
    </source>
</evidence>
<evidence type="ECO:0000303" key="17">
    <source>
    </source>
</evidence>
<evidence type="ECO:0000303" key="18">
    <source>
    </source>
</evidence>
<evidence type="ECO:0000303" key="19">
    <source>
    </source>
</evidence>
<evidence type="ECO:0000305" key="20"/>
<organismHost>
    <name type="scientific">Sus scrofa</name>
    <name type="common">Pig</name>
    <dbReference type="NCBI Taxonomy" id="9823"/>
</organismHost>
<keyword id="KW-1072">Activation of host autophagy by virus</keyword>
<keyword id="KW-0067">ATP-binding</keyword>
<keyword id="KW-1015">Disulfide bond</keyword>
<keyword id="KW-1170">Fusion of virus membrane with host endosomal membrane</keyword>
<keyword id="KW-1168">Fusion of virus membrane with host membrane</keyword>
<keyword id="KW-0325">Glycoprotein</keyword>
<keyword id="KW-0342">GTP-binding</keyword>
<keyword id="KW-0347">Helicase</keyword>
<keyword id="KW-1035">Host cytoplasm</keyword>
<keyword id="KW-1043">Host membrane</keyword>
<keyword id="KW-0945">Host-virus interaction</keyword>
<keyword id="KW-0378">Hydrolase</keyword>
<keyword id="KW-1090">Inhibition of host innate immune response by virus</keyword>
<keyword id="KW-1092">Inhibition of host IRF3 by virus</keyword>
<keyword id="KW-1113">Inhibition of host RLR pathway by virus</keyword>
<keyword id="KW-0407">Ion channel</keyword>
<keyword id="KW-0406">Ion transport</keyword>
<keyword id="KW-0472">Membrane</keyword>
<keyword id="KW-0540">Nuclease</keyword>
<keyword id="KW-0547">Nucleotide-binding</keyword>
<keyword id="KW-0548">Nucleotidyltransferase</keyword>
<keyword id="KW-0645">Protease</keyword>
<keyword id="KW-0696">RNA-directed RNA polymerase</keyword>
<keyword id="KW-0720">Serine protease</keyword>
<keyword id="KW-0788">Thiol protease</keyword>
<keyword id="KW-0808">Transferase</keyword>
<keyword id="KW-0812">Transmembrane</keyword>
<keyword id="KW-1133">Transmembrane helix</keyword>
<keyword id="KW-0813">Transport</keyword>
<keyword id="KW-1161">Viral attachment to host cell</keyword>
<keyword id="KW-1234">Viral attachment to host entry receptor</keyword>
<keyword id="KW-0899">Viral immunoevasion</keyword>
<keyword id="KW-1182">Viral ion channel</keyword>
<keyword id="KW-1162">Viral penetration into host cytoplasm</keyword>
<keyword id="KW-0693">Viral RNA replication</keyword>
<keyword id="KW-0946">Virion</keyword>
<keyword id="KW-1160">Virus entry into host cell</keyword>
<sequence length="3898" mass="438430">MELNHFELLYKTNKQKPMGVEEPVYDVTGRPLFGDPSEVHPQSTLKLPHDRGRGNIKTTLKNLPRRGDCRSGNHLGPVSGIYVKPGPVFYQDYMGPVYHRAPLEFFDEAQFCEVTKRIGRVTGSDGKLYHIYVCIDGCILLKLAKRGEPRTLKWIRNLTDCPLWVTSCSDDGASASKEKKPDRINKGKLKIAPKEHEKDSRTKPPDATIVVEGVKYQVKKKGKVKGKNTQDGLYHNKNKPPESRKKLEKALLAWAVIAIMLYQPVAAENITQWNLRDNGTNGIQHAMYLRGVSRSLHGIWPEKICKGVPTYLATDTELREIQGMMVASEGTNYTCCKLQRHEWNKHGWCNWYNIDPWIQLMNRTQANLAEGPPSKECAVTCRYDKNADINVVTQARNRPTTLTGCKKGTNFSFAGTVIEGPCNFNVSVEDILYGDHECGSLLQDTALYLVDGMTNTIERARQGAARVTSWLGRQLRIAGKRLEGRSKTWFGAYALSPYCNVTTKIGYIWYTNNCTPACLPKNTKIIGPGKFDTNAEDGKILHEMGGHLSEFLLLSLVVLSDFAPETASALYLILHYVIPQSHEEPEGCDTNQLNLTVELRTEDVIPSSVWNVGKYVCVRPDWWPYETKVALLFEEAGQVVKLALRALRDLTRVWNSASTTAFLICLIKVLRGQVVQGVIWLLLVTGAQGRLACKEDHRYAISTTNEIGLHGAEGLTTTWKEYNHNLQLDDGTVKAICMAGSFKVTALNVVSRRYLASLHKDALPTSVTFELLFDGTSPLTEEMGDDFGFGLCPYDTSPVVKGKYNTTLLNGSAFYLVCPIGWTGVIECTAVSPTTLRTEVVKTFRREKPFPYRRDCVTTTVENEDLFYCKWGGNWTCVKGEPVTYTGGPVKQCRWCGFDFNEPDGLPHYPIGKCILANETGYRIVDSTDCNRDGVVISTEGSHECLIGNTTVKVHALDERLGPMPCRPKEIVSSAGPVRKTSCTFNYAKTLRNRYYEPRDSYFQQYMLKGEYQYWFDLDVTDRHSDYFAEFIVLVVVALLGGRYVLWLIVTYIVLTEQLAAGLQLGQGEVVLIGNLITHTDIEVVVYFLLLYLVMRDEPIKKWILLLFHAMTNNPVKTITVALLMVSGVAKGGKIDGGWQRLPETNFDIQLALTVIVVAVMLLAKKDPTTVPLVITVATLRTAKITNGLSTDLAIATVSTALLTWTYISDYYKYKTLLQYLISTVTGIFLIRVLKGVGELDLHTPTLPSYRPLFFILVYLISTAVVTRWNLDIAGLLLQCVPTLLMVFTMWADILTLILILPTYELTKLYYLKEVKIGAERGWLWKTNFKRVNDIYEVDQAGEGVYLFPSKQKTGTITGTMLPLIKAILISCISNKWQFIYLLYLIFEVSYYLHKKIIDEIAGGTNFISRLVAALIEANWAFDNEEVRGLKKFFLLSSRVKELIIKHKVRNEVMVHWFGDEEVYGMPKLVGLVKAATLSKNKHCILCTVCENREWRGETCPKCGRFGPPVTCGMTLADFEEKHYKRIFFREDQSEGPVREEYAGYLQYRARGQLFLRNLPVLATKVKMLLVGNLGTEVGDLEHLGWVLRGPAVCKKVTEHEKCTTSIMDKLTAFFGVMPRGTTPRAPVRFPTSLLKIRRGLETGWAYTHQGGISSVDHVTCGKDLLVCDTMGRTRVVCQSNNKMTDESEYGVKTDSGCPEGARCYVFNREAVNISGTKGAMVHLQKTGGEFTCVTASGTPAFFDLKNLKGWSGLPIFEASSGRVVGRVKVGKNEDSKPTKLMSGIQTVSKSTTDLTEMVKKITTMNRGEFRQITLATGAGKTTELPRSVIEEIGRHKRVLVLIPLRAAAESVYQYMRQKHPSIAFNLRIGEMKEGDMATGITYASYGYFCQMPQPKLRAAMVEYSFIFLDEYHCSTPEQLAIMGKIHRFSENLRVVAMTATPAGTVTTTGQKHPIEEYIAPEVMKGEDLGPEYLDIAGLKIPVEEMKSNMLVFVPTRNMAVETAKKLKAKGYNSGYYYSGEDPSNLRVVTSQSPYVVVATNAIESGVTLPDLDVVVDTGLKCEKRIRLSPKMPFIVTGLKRMAVTIGEQAQRRGRVGRVKPGRYYRSQETPVGSKDYHYDLLQAQRYGIEDGINITKSFREMNYDWSLYEEDSLMITQLEILNNLLISEELPMAVKNIMARTDHPEPIQLAYNSYETQVPVLFPKIKNGEVTDSYDNYTFLNARKLGDDVPPYVYATEDEDLAVELLGLDWPDPGNQGTVEAGRALKQVVGLSTAENALLVALFGYVGYQALSKRHIPVVTDIYSIEDHRLEDTTHLQYAPNAIKTEGKETELKELAQGDVQRCMEAMTNYARDGIQFMKSQALKVKETPTYKETMDTVADYVKKFMEALADSKEDIIKYGLWGTHTALYKSIGARLGNETAFATLVVKWLAFGGESIADHVKQAATDLVVYYIINRPQFPGDTETQQEGRKFVASLLVSALATYTYKSWNYNNLSKIVEPALATLPYAATALKLFAPTRLESVVILSTAIYKTYLSIRRGKSDGLLGTGVSAAMEIMSQNPVSVGIAVMLGVGAVAAHNAIEASEQKRTLLMKVFVKNFLDQAATDELVKESPEKIIMALFEAVQTVGNPLRLVYHVYGVFYKGWEAKELAQRTAGRNLFTLIMFEAVELLGVDSEGKIRQLSSNYILELLYKFRDSIKSSVRQMAISWAPAPFSCDWTPTDDRIGLPQDNFLRVETKCPCGYKMKAVKNCAGELRLLEEEGSFLCRNKFGRGSRNYRVTKYYDDNLSEIKPVIRMEGHVELYYKGATIKLDFNNSKTILATDKWEVDHSTLVRVLKRHTGAGYCGAYLGEKPNHKHLIERDCATITKDKVCFLKMKRGCAFTYDLSLHNLTRLIELVHKNNLEDKEIPAVTVTTWLAYTFVNEDIGTIKPAFGEKITPEMQEEITLQPAVLVDATDVTVTVVGETPTMTTGETPTTFTSSGPDPKGQQVLKLGVGEGQYPGTNPQRASLHEAIQSADERPSVLILGSDKATSNRVKTVKNVKVYRGRDPLEVRDMMRRGKILVIALSRVDNALLKFVDYKGTFLTRETLEALSLGRPKKKNITKAEAQWLLRLEDQMEELPDWFAAGEPIFLEANIKHDRYHLVGDIATIKEKAKQLGATDSTKISKEVGAKVYSMKLSNWVMQEENKQSNLTPLFEELLQQCPPGGQNKTAHMVSAYQLAQGNWMPTSCHVFMGTISARRTKTHPYEAYVKLRELVEEHKMKTLCPGSSLRNDNEWVIGKIKYQGNLRTKHMLNPGKVAEQLHREGHRHNVYNKTIGSVMTATGIRLEKLPVVRAQTDTTNFHQAIRDKIDKEENLQTPGLHKKLMEVFNALKRPELESSYDAVEWEELERGINRKGAAGFFERKNIGEILDSEKIKVEEIIDNLKKGRNIKYYETAIPKNEKRDVNDDWTAGDFVDEKKPRVIQYPEAKTRLAITKVMYKWVKQKPVVIPGYEGKTPLFQIFDKVKKEWDQFQNPVAVSFDTKAWDTQVTTNDLELIKDIQKYYFKKKWHKFIDTLTMHMSEVPVITADGEVYIRKGQRGSGQPDTSAGNSMLNVLTMVYAFCEATGVPYKSFDRVAKIHVCGDDGFLITERALGEKFASKGVQILYEAGKPQKITEGDKMKVAYQFADIEFCSHTPIQVRWSDNTSSYMPGRNTTTILAKMATRLDSSGERGTIAYEKAVAFSFLLMYSWNPLIRRICLLVLSTELQVKPGKSTTYYYEGDPISAYKEVIGHNLFDLKRTSFEKLAKLNLSMSVLGAWTRHTSKRLLQDCVNMGVKEGNWLVNADRLVSSKTGNRYVPGEGHTLQGRHYEELALARKQINSFQGTDRYNLGPIVNMVLRRLRVMMMTLIGRGV</sequence>
<dbReference type="EC" id="3.4.22.-"/>
<dbReference type="EC" id="3.4.21.113"/>
<dbReference type="EC" id="3.6.1.15"/>
<dbReference type="EC" id="3.6.4.13"/>
<dbReference type="EC" id="2.7.7.48"/>
<dbReference type="EMBL" id="M31768">
    <property type="protein sequence ID" value="AAA43843.1"/>
    <property type="molecule type" value="Genomic_RNA"/>
</dbReference>
<dbReference type="PIR" id="A35317">
    <property type="entry name" value="GNWVHB"/>
</dbReference>
<dbReference type="SMR" id="P21530"/>
<dbReference type="IntAct" id="P21530">
    <property type="interactions" value="62"/>
</dbReference>
<dbReference type="MEROPS" id="S31.001"/>
<dbReference type="Proteomes" id="UP000008569">
    <property type="component" value="Genome"/>
</dbReference>
<dbReference type="GO" id="GO:0030430">
    <property type="term" value="C:host cell cytoplasm"/>
    <property type="evidence" value="ECO:0007669"/>
    <property type="project" value="UniProtKB-SubCell"/>
</dbReference>
<dbReference type="GO" id="GO:0033644">
    <property type="term" value="C:host cell membrane"/>
    <property type="evidence" value="ECO:0007669"/>
    <property type="project" value="UniProtKB-SubCell"/>
</dbReference>
<dbReference type="GO" id="GO:0044228">
    <property type="term" value="C:host cell surface"/>
    <property type="evidence" value="ECO:0007669"/>
    <property type="project" value="UniProtKB-SubCell"/>
</dbReference>
<dbReference type="GO" id="GO:0016020">
    <property type="term" value="C:membrane"/>
    <property type="evidence" value="ECO:0007669"/>
    <property type="project" value="UniProtKB-KW"/>
</dbReference>
<dbReference type="GO" id="GO:0055036">
    <property type="term" value="C:virion membrane"/>
    <property type="evidence" value="ECO:0007669"/>
    <property type="project" value="UniProtKB-SubCell"/>
</dbReference>
<dbReference type="GO" id="GO:0005524">
    <property type="term" value="F:ATP binding"/>
    <property type="evidence" value="ECO:0007669"/>
    <property type="project" value="UniProtKB-KW"/>
</dbReference>
<dbReference type="GO" id="GO:0016887">
    <property type="term" value="F:ATP hydrolysis activity"/>
    <property type="evidence" value="ECO:0007669"/>
    <property type="project" value="RHEA"/>
</dbReference>
<dbReference type="GO" id="GO:0015267">
    <property type="term" value="F:channel activity"/>
    <property type="evidence" value="ECO:0007669"/>
    <property type="project" value="UniProtKB-KW"/>
</dbReference>
<dbReference type="GO" id="GO:0004197">
    <property type="term" value="F:cysteine-type endopeptidase activity"/>
    <property type="evidence" value="ECO:0007669"/>
    <property type="project" value="InterPro"/>
</dbReference>
<dbReference type="GO" id="GO:0005525">
    <property type="term" value="F:GTP binding"/>
    <property type="evidence" value="ECO:0007669"/>
    <property type="project" value="UniProtKB-KW"/>
</dbReference>
<dbReference type="GO" id="GO:0033897">
    <property type="term" value="F:ribonuclease T2 activity"/>
    <property type="evidence" value="ECO:0007669"/>
    <property type="project" value="InterPro"/>
</dbReference>
<dbReference type="GO" id="GO:0003723">
    <property type="term" value="F:RNA binding"/>
    <property type="evidence" value="ECO:0007669"/>
    <property type="project" value="InterPro"/>
</dbReference>
<dbReference type="GO" id="GO:0003724">
    <property type="term" value="F:RNA helicase activity"/>
    <property type="evidence" value="ECO:0007669"/>
    <property type="project" value="UniProtKB-EC"/>
</dbReference>
<dbReference type="GO" id="GO:0003968">
    <property type="term" value="F:RNA-directed RNA polymerase activity"/>
    <property type="evidence" value="ECO:0007669"/>
    <property type="project" value="UniProtKB-KW"/>
</dbReference>
<dbReference type="GO" id="GO:0004252">
    <property type="term" value="F:serine-type endopeptidase activity"/>
    <property type="evidence" value="ECO:0007669"/>
    <property type="project" value="InterPro"/>
</dbReference>
<dbReference type="GO" id="GO:0070008">
    <property type="term" value="F:serine-type exopeptidase activity"/>
    <property type="evidence" value="ECO:0007669"/>
    <property type="project" value="InterPro"/>
</dbReference>
<dbReference type="GO" id="GO:0098670">
    <property type="term" value="P:entry receptor-mediated virion attachment to host cell"/>
    <property type="evidence" value="ECO:0007669"/>
    <property type="project" value="UniProtKB-KW"/>
</dbReference>
<dbReference type="GO" id="GO:0039654">
    <property type="term" value="P:fusion of virus membrane with host endosome membrane"/>
    <property type="evidence" value="ECO:0007669"/>
    <property type="project" value="UniProtKB-KW"/>
</dbReference>
<dbReference type="GO" id="GO:0034220">
    <property type="term" value="P:monoatomic ion transmembrane transport"/>
    <property type="evidence" value="ECO:0007669"/>
    <property type="project" value="UniProtKB-KW"/>
</dbReference>
<dbReference type="GO" id="GO:0006508">
    <property type="term" value="P:proteolysis"/>
    <property type="evidence" value="ECO:0007669"/>
    <property type="project" value="UniProtKB-KW"/>
</dbReference>
<dbReference type="GO" id="GO:0046718">
    <property type="term" value="P:symbiont entry into host cell"/>
    <property type="evidence" value="ECO:0007669"/>
    <property type="project" value="UniProtKB-KW"/>
</dbReference>
<dbReference type="GO" id="GO:0039520">
    <property type="term" value="P:symbiont-mediated activation of host autophagy"/>
    <property type="evidence" value="ECO:0007669"/>
    <property type="project" value="UniProtKB-KW"/>
</dbReference>
<dbReference type="GO" id="GO:0039548">
    <property type="term" value="P:symbiont-mediated suppression of host cytoplasmic pattern recognition receptor signaling pathway via inhibition of IRF3 activity"/>
    <property type="evidence" value="ECO:0007669"/>
    <property type="project" value="UniProtKB-KW"/>
</dbReference>
<dbReference type="GO" id="GO:0019082">
    <property type="term" value="P:viral protein processing"/>
    <property type="evidence" value="ECO:0007669"/>
    <property type="project" value="InterPro"/>
</dbReference>
<dbReference type="GO" id="GO:0039694">
    <property type="term" value="P:viral RNA genome replication"/>
    <property type="evidence" value="ECO:0007669"/>
    <property type="project" value="InterPro"/>
</dbReference>
<dbReference type="CDD" id="cd17931">
    <property type="entry name" value="DEXHc_viral_Ns3"/>
    <property type="match status" value="1"/>
</dbReference>
<dbReference type="CDD" id="cd23201">
    <property type="entry name" value="Pestivirus_RdRp"/>
    <property type="match status" value="1"/>
</dbReference>
<dbReference type="FunFam" id="2.60.320.20:FF:000001">
    <property type="entry name" value="Envelope glycoprotein E2"/>
    <property type="match status" value="1"/>
</dbReference>
<dbReference type="FunFam" id="3.30.70.270:FF:000083">
    <property type="entry name" value="Genome polyprotein"/>
    <property type="match status" value="1"/>
</dbReference>
<dbReference type="FunFam" id="3.40.50.300:FF:001125">
    <property type="entry name" value="Genome polyprotein"/>
    <property type="match status" value="1"/>
</dbReference>
<dbReference type="FunFam" id="3.40.50.300:FF:001127">
    <property type="entry name" value="Genome polyprotein"/>
    <property type="match status" value="1"/>
</dbReference>
<dbReference type="Gene3D" id="3.30.70.270">
    <property type="match status" value="2"/>
</dbReference>
<dbReference type="Gene3D" id="3.40.50.300">
    <property type="entry name" value="P-loop containing nucleotide triphosphate hydrolases"/>
    <property type="match status" value="2"/>
</dbReference>
<dbReference type="Gene3D" id="2.60.40.4200">
    <property type="entry name" value="Pestivirus envelope glycoprotein E2, C-terminal domain"/>
    <property type="match status" value="1"/>
</dbReference>
<dbReference type="Gene3D" id="2.60.320.20">
    <property type="entry name" value="Pestivirus envelope glycoprotein E2, domain A"/>
    <property type="match status" value="1"/>
</dbReference>
<dbReference type="Gene3D" id="2.60.40.3000">
    <property type="entry name" value="Pestivirus envelope glycoprotein E2, domain B"/>
    <property type="match status" value="1"/>
</dbReference>
<dbReference type="Gene3D" id="2.30.140.40">
    <property type="entry name" value="Pestivirus Npro endopeptidase C53, interaction domain"/>
    <property type="match status" value="1"/>
</dbReference>
<dbReference type="Gene3D" id="3.90.730.10">
    <property type="entry name" value="Ribonuclease T2-like"/>
    <property type="match status" value="1"/>
</dbReference>
<dbReference type="InterPro" id="IPR021824">
    <property type="entry name" value="Capsid-C_pestivirus"/>
</dbReference>
<dbReference type="InterPro" id="IPR043502">
    <property type="entry name" value="DNA/RNA_pol_sf"/>
</dbReference>
<dbReference type="InterPro" id="IPR011492">
    <property type="entry name" value="Flavi_DEAD"/>
</dbReference>
<dbReference type="InterPro" id="IPR014001">
    <property type="entry name" value="Helicase_ATP-bd"/>
</dbReference>
<dbReference type="InterPro" id="IPR001650">
    <property type="entry name" value="Helicase_C-like"/>
</dbReference>
<dbReference type="InterPro" id="IPR022120">
    <property type="entry name" value="NS2"/>
</dbReference>
<dbReference type="InterPro" id="IPR030399">
    <property type="entry name" value="NS2_C74"/>
</dbReference>
<dbReference type="InterPro" id="IPR049486">
    <property type="entry name" value="NS3-hel_C_flaviviridae"/>
</dbReference>
<dbReference type="InterPro" id="IPR027417">
    <property type="entry name" value="P-loop_NTPase"/>
</dbReference>
<dbReference type="InterPro" id="IPR008751">
    <property type="entry name" value="Peptidase_C53"/>
</dbReference>
<dbReference type="InterPro" id="IPR042542">
    <property type="entry name" value="Peptidase_C53_interaction"/>
</dbReference>
<dbReference type="InterPro" id="IPR032521">
    <property type="entry name" value="Pestivirus_E2"/>
</dbReference>
<dbReference type="InterPro" id="IPR042309">
    <property type="entry name" value="Pestivirus_E2_A"/>
</dbReference>
<dbReference type="InterPro" id="IPR042310">
    <property type="entry name" value="Pestivirus_E2_B"/>
</dbReference>
<dbReference type="InterPro" id="IPR042311">
    <property type="entry name" value="Pestivirus_E2_D"/>
</dbReference>
<dbReference type="InterPro" id="IPR000280">
    <property type="entry name" value="Pestivirus_NS3_S31"/>
</dbReference>
<dbReference type="InterPro" id="IPR043128">
    <property type="entry name" value="Rev_trsase/Diguanyl_cyclase"/>
</dbReference>
<dbReference type="InterPro" id="IPR007094">
    <property type="entry name" value="RNA-dir_pol_PSvirus"/>
</dbReference>
<dbReference type="InterPro" id="IPR002166">
    <property type="entry name" value="RNA_pol_HCV"/>
</dbReference>
<dbReference type="InterPro" id="IPR036430">
    <property type="entry name" value="RNase_T2-like_sf"/>
</dbReference>
<dbReference type="InterPro" id="IPR033130">
    <property type="entry name" value="RNase_T2_His_AS_2"/>
</dbReference>
<dbReference type="PANTHER" id="PTHR18934">
    <property type="entry name" value="ATP-DEPENDENT RNA HELICASE"/>
    <property type="match status" value="1"/>
</dbReference>
<dbReference type="PANTHER" id="PTHR18934:SF91">
    <property type="entry name" value="PRE-MRNA-SPLICING FACTOR ATP-DEPENDENT RNA HELICASE PRP16"/>
    <property type="match status" value="1"/>
</dbReference>
<dbReference type="Pfam" id="PF11889">
    <property type="entry name" value="Capsid_pestivir"/>
    <property type="match status" value="1"/>
</dbReference>
<dbReference type="Pfam" id="PF20907">
    <property type="entry name" value="Flav_NS3-hel_C"/>
    <property type="match status" value="1"/>
</dbReference>
<dbReference type="Pfam" id="PF07652">
    <property type="entry name" value="Flavi_DEAD"/>
    <property type="match status" value="1"/>
</dbReference>
<dbReference type="Pfam" id="PF00271">
    <property type="entry name" value="Helicase_C"/>
    <property type="match status" value="1"/>
</dbReference>
<dbReference type="Pfam" id="PF05550">
    <property type="entry name" value="Peptidase_C53"/>
    <property type="match status" value="1"/>
</dbReference>
<dbReference type="Pfam" id="PF12387">
    <property type="entry name" value="Peptidase_C74"/>
    <property type="match status" value="1"/>
</dbReference>
<dbReference type="Pfam" id="PF05578">
    <property type="entry name" value="Peptidase_S31"/>
    <property type="match status" value="1"/>
</dbReference>
<dbReference type="Pfam" id="PF16329">
    <property type="entry name" value="Pestivirus_E2"/>
    <property type="match status" value="1"/>
</dbReference>
<dbReference type="Pfam" id="PF00998">
    <property type="entry name" value="RdRP_3"/>
    <property type="match status" value="1"/>
</dbReference>
<dbReference type="PRINTS" id="PR00729">
    <property type="entry name" value="CDVENDOPTASE"/>
</dbReference>
<dbReference type="SMART" id="SM00487">
    <property type="entry name" value="DEXDc"/>
    <property type="match status" value="1"/>
</dbReference>
<dbReference type="SMART" id="SM00490">
    <property type="entry name" value="HELICc"/>
    <property type="match status" value="1"/>
</dbReference>
<dbReference type="SUPFAM" id="SSF56672">
    <property type="entry name" value="DNA/RNA polymerases"/>
    <property type="match status" value="1"/>
</dbReference>
<dbReference type="SUPFAM" id="SSF52540">
    <property type="entry name" value="P-loop containing nucleoside triphosphate hydrolases"/>
    <property type="match status" value="1"/>
</dbReference>
<dbReference type="SUPFAM" id="SSF55895">
    <property type="entry name" value="Ribonuclease Rh-like"/>
    <property type="match status" value="1"/>
</dbReference>
<dbReference type="PROSITE" id="PS51192">
    <property type="entry name" value="HELICASE_ATP_BIND_1"/>
    <property type="match status" value="1"/>
</dbReference>
<dbReference type="PROSITE" id="PS51194">
    <property type="entry name" value="HELICASE_CTER"/>
    <property type="match status" value="1"/>
</dbReference>
<dbReference type="PROSITE" id="PS51692">
    <property type="entry name" value="PESTIVIRUS_NS2_PRO"/>
    <property type="match status" value="1"/>
</dbReference>
<dbReference type="PROSITE" id="PS51535">
    <property type="entry name" value="PESTIVIRUS_NS3PRO"/>
    <property type="match status" value="1"/>
</dbReference>
<dbReference type="PROSITE" id="PS51876">
    <property type="entry name" value="PV_NPRO"/>
    <property type="match status" value="1"/>
</dbReference>
<dbReference type="PROSITE" id="PS50507">
    <property type="entry name" value="RDRP_SSRNA_POS"/>
    <property type="match status" value="1"/>
</dbReference>
<dbReference type="PROSITE" id="PS00531">
    <property type="entry name" value="RNASE_T2_2"/>
    <property type="match status" value="1"/>
</dbReference>
<name>POLG_CSFVB</name>
<organism>
    <name type="scientific">Classical swine fever virus (strain Brescia)</name>
    <name type="common">CSFV</name>
    <name type="synonym">Hog cholera virus</name>
    <dbReference type="NCBI Taxonomy" id="11098"/>
    <lineage>
        <taxon>Viruses</taxon>
        <taxon>Riboviria</taxon>
        <taxon>Orthornavirae</taxon>
        <taxon>Kitrinoviricota</taxon>
        <taxon>Flasuviricetes</taxon>
        <taxon>Amarillovirales</taxon>
        <taxon>Flaviviridae</taxon>
        <taxon>Pestivirus</taxon>
        <taxon>Pestivirus suis</taxon>
    </lineage>
</organism>
<comment type="function">
    <molecule>N-terminal protease</molecule>
    <text evidence="3">Leader cysteine autoprotease that cleaves itself from the nascent polyprotein during translation of the viral mRNA. Once released, plays a role in the inhibition of host innate immune response by interacting with host IRF3 and inducing its proteasomal degradation.</text>
</comment>
<comment type="function">
    <molecule>Capsid protein C</molecule>
    <text evidence="3">Packages viral RNA to form a viral nucleocapsid and thereby protects viral RNA. Also plays a role in transcription regulation. Protects the incoming virus against IFN-induced effectors.</text>
</comment>
<comment type="function">
    <molecule>E(rns) glycoprotein</molecule>
    <text evidence="3 13">Plays a role in viral entry. Interacts with host RPSA that acts as a cellular attachment receptor for the virus. Also possesses intrinsic ribonuclease (RNase) activity that can inhibit the production of type I interferon and assist in the development of persistent infections. Cleaves preferentially NpU bonds. Binds to heparan sulfate on the host cells for entry (PubMed:11000226).</text>
</comment>
<comment type="function">
    <molecule>Envelope glycoprotein E1</molecule>
    <text evidence="3">Plays a role in cell attachment and subsequent fusion of viral and cellular membranes. Therefore, mediates together with envelope glycoprotein E2 the viral entry.</text>
</comment>
<comment type="function">
    <molecule>Envelope glycoprotein E2</molecule>
    <text evidence="3 14 15">Plays a role in cell attachment and subsequent fusion of viral and cellular membranes (By similarity). Therefore, mediates together with envelope glycoprotein E1 the viral entry (By similarity). Binds to host ADAM17 receptor for entry (By similarity). Binds to host ANXA2 for entry (PubMed:25701745). Binds to host MERTK for entry (PubMed:32172658).</text>
</comment>
<comment type="function">
    <molecule>Viroporin p7</molecule>
    <text evidence="3">Plays an essential role in the virus replication cycle by acting as a viroporin. Forms ion conductive pores, which alters the cell permeability allowing the transport of ions and other small molecules.</text>
</comment>
<comment type="function">
    <molecule>Non-structural protein 2-3</molecule>
    <text evidence="3">Autoprotease that associates with the host chaperone JIV and cleaves the NS2-3 protein between NS2 and NS3. Also plays a role in the formation of infectious particles.</text>
</comment>
<comment type="function">
    <molecule>Cysteine protease NS2</molecule>
    <text evidence="3">Plays a role in the regulation of viral RNA replication.</text>
</comment>
<comment type="function">
    <molecule>Serine protease NS3</molecule>
    <text evidence="3">Multifunctional protein that contains an N-terminal protease and a C-terminal helicase, playing essential roles in viral polyprotein processing and viral genome replication. The chymotrypsin-like serine protease activity utilizes NS4A as an essential cofactor and catalyzes the cleavage of the polyprotein leading to the release of NS4A, NS4B, NS5A, and NS5B. Plays a role in the inhibition of host NF-kappa-B activation by interacting with and inhibiting host TRAF6. Interacts with NS5B to enhance RNA-dependent RNA polymerase activity.</text>
</comment>
<comment type="function">
    <molecule>Non-structural protein 4A</molecule>
    <text evidence="3">Acts as a cofactor for the NS3 protease activity.</text>
</comment>
<comment type="function">
    <molecule>Non-structural protein 4B</molecule>
    <text evidence="3">Induces a specific membrane alteration that serves as a scaffold for the virus replication complex (By similarity). Antagonizes host cell apoptosis by interacting with host ferritin heavy chain. The ORF4 protein physically binds host FTH1/FHC, resulting in the reduction of FTH1 protein levels in host cells. Reduction of FTH1 concentration further inhibits the accumulation of reactive oxygen in host cells, leading to reduced apoptosis.</text>
</comment>
<comment type="function">
    <molecule>Non-structural protein 5A</molecule>
    <text evidence="3">Regulates viral RNA replication by interacting with the 3'-untranslated region of viral RNA in a dose-dependent manner. At small concentrations promotes viral synthesis by interacting with the polymerase NS5B while at large concentrations, inhibits replication.</text>
</comment>
<comment type="function">
    <molecule>RNA-directed RNA polymerase</molecule>
    <text evidence="6">Replicates the viral (+) and (-) genome.</text>
</comment>
<comment type="catalytic activity">
    <molecule>Serine protease NS3</molecule>
    <reaction>
        <text>Leu is conserved at position P1 for all four cleavage sites. Alanine is found at position P1' of the NS4A-NS4B cleavage site, whereas serine is found at position P1' of the NS3-NS4A, NS4B-NS5A and NS5A-NS5B cleavage sites.</text>
        <dbReference type="EC" id="3.4.21.113"/>
    </reaction>
</comment>
<comment type="catalytic activity">
    <molecule>RNA-directed RNA polymerase</molecule>
    <reaction evidence="6">
        <text>RNA(n) + a ribonucleoside 5'-triphosphate = RNA(n+1) + diphosphate</text>
        <dbReference type="Rhea" id="RHEA:21248"/>
        <dbReference type="Rhea" id="RHEA-COMP:14527"/>
        <dbReference type="Rhea" id="RHEA-COMP:17342"/>
        <dbReference type="ChEBI" id="CHEBI:33019"/>
        <dbReference type="ChEBI" id="CHEBI:61557"/>
        <dbReference type="ChEBI" id="CHEBI:140395"/>
        <dbReference type="EC" id="2.7.7.48"/>
    </reaction>
</comment>
<comment type="catalytic activity">
    <molecule>Serine protease NS3</molecule>
    <reaction>
        <text>a ribonucleoside 5'-triphosphate + H2O = a ribonucleoside 5'-diphosphate + phosphate + H(+)</text>
        <dbReference type="Rhea" id="RHEA:23680"/>
        <dbReference type="ChEBI" id="CHEBI:15377"/>
        <dbReference type="ChEBI" id="CHEBI:15378"/>
        <dbReference type="ChEBI" id="CHEBI:43474"/>
        <dbReference type="ChEBI" id="CHEBI:57930"/>
        <dbReference type="ChEBI" id="CHEBI:61557"/>
        <dbReference type="EC" id="3.6.1.15"/>
    </reaction>
</comment>
<comment type="catalytic activity">
    <molecule>Serine protease NS3</molecule>
    <reaction>
        <text>ATP + H2O = ADP + phosphate + H(+)</text>
        <dbReference type="Rhea" id="RHEA:13065"/>
        <dbReference type="ChEBI" id="CHEBI:15377"/>
        <dbReference type="ChEBI" id="CHEBI:15378"/>
        <dbReference type="ChEBI" id="CHEBI:30616"/>
        <dbReference type="ChEBI" id="CHEBI:43474"/>
        <dbReference type="ChEBI" id="CHEBI:456216"/>
        <dbReference type="EC" id="3.6.4.13"/>
    </reaction>
</comment>
<comment type="subunit">
    <molecule>N-terminal protease</molecule>
    <text evidence="3">Interacts (via N-terminus) with host SP1; this interaction induces proteasomal degradation of SP1 with subsequent down-regulation of HDAC1 and ISG15 expression thereby counteracting the host innate immunity (By similarity). Interacts (via C-terminus) with host IRF3 (By similarity).</text>
</comment>
<comment type="subunit">
    <molecule>Capsid protein C</molecule>
    <text evidence="3">Interacts with host OS9.</text>
</comment>
<comment type="subunit">
    <molecule>E(rns) glycoprotein</molecule>
    <text evidence="3">Homodimer; disulfide-linked. Interacts with host RPSA.</text>
</comment>
<comment type="subunit">
    <molecule>Envelope glycoprotein E1</molecule>
    <text evidence="3">Homodimer; disulfide-linked (By similarity). Heterodimer with E1; disulfide-linked (By similarity).</text>
</comment>
<comment type="subunit">
    <molecule>Envelope glycoprotein E2</molecule>
    <text evidence="3 14 15">Homodimer; disulfide-linked (By similarity). Heterodimer with E1; disulfide-linked (By similarity). Interacts with host TRX2 (By similarity). Interacts with host receptor ADAM17 (via metalloproteinase domain); this interaction allows binding and probably entry of the virus into the host cell (By similarity). Interacts with host ANXA2; this interaction allows binding and probably entry of the virus into the host cell (PubMed:25701745). Interacts with host MERTK; this interaction allows binding and probably entry of the virus into the host cell (PubMed:32172658).</text>
</comment>
<comment type="subunit">
    <molecule>Serine protease NS3</molecule>
    <text evidence="3">Interacts with host TRAF6; this interaction inhibits host NF-kappa-B pathway. Interacts with NS5B; this interaction enhances RNA-dependent RNA polymerase activity. Interacts with protein NS4A.</text>
</comment>
<comment type="subunit">
    <molecule>Non-structural protein 4B</molecule>
    <text evidence="3">Interacts with host RAB5, this interaction facilitates the formation of NS4B-related complex. Interacts with host FTH1; this interaction plays a positive role in viral anti-apoptosis.</text>
</comment>
<comment type="subunit">
    <molecule>Non-structural protein 5A</molecule>
    <text evidence="3">Interacts with RNA-directed RNA polymerase. Interacts with host RSAD2; this interaction inhibits viral replication.</text>
</comment>
<comment type="subunit">
    <molecule>RNA-directed RNA polymerase</molecule>
    <text evidence="3">Interacts with NS5A; this interaction promotes viral replication.</text>
</comment>
<comment type="interaction">
    <interactant intactId="EBI-12558622">
        <id>PRO_0000038062</id>
    </interactant>
    <interactant intactId="EBI-307386">
        <id>P25963</id>
        <label>NFKBIA</label>
    </interactant>
    <organismsDiffer>true</organismsDiffer>
    <experiments>4</experiments>
</comment>
<comment type="interaction">
    <interactant intactId="EBI-12558622">
        <id>PRO_0000038062</id>
    </interactant>
    <interactant intactId="EBI-12558699">
        <id>Q08353</id>
        <label>NFKBIA</label>
    </interactant>
    <organismsDiffer>true</organismsDiffer>
    <experiments>4</experiments>
</comment>
<comment type="interaction">
    <interactant intactId="EBI-12515736">
        <id>PRO_0000038063</id>
    </interactant>
    <interactant intactId="EBI-12515741">
        <id>K9IWF9</id>
        <label>IQGAP1</label>
    </interactant>
    <organismsDiffer>true</organismsDiffer>
    <experiments>3</experiments>
</comment>
<comment type="subcellular location">
    <molecule>Capsid protein C</molecule>
    <subcellularLocation>
        <location evidence="3">Virion</location>
    </subcellularLocation>
</comment>
<comment type="subcellular location">
    <molecule>E(rns) glycoprotein</molecule>
    <subcellularLocation>
        <location>Host membrane</location>
        <topology>Peripheral membrane protein</topology>
    </subcellularLocation>
    <subcellularLocation>
        <location>Virion membrane</location>
        <topology evidence="20">Peripheral membrane protein</topology>
    </subcellularLocation>
    <text evidence="1">The C-terminus membrane anchor of Erns represents an amphipathic helix embedded in plane into the membrane.</text>
</comment>
<comment type="subcellular location">
    <molecule>Envelope glycoprotein E2</molecule>
    <subcellularLocation>
        <location evidence="3">Host cell surface</location>
    </subcellularLocation>
    <subcellularLocation>
        <location evidence="3">Virion membrane</location>
    </subcellularLocation>
</comment>
<comment type="subcellular location">
    <molecule>Cysteine protease NS2</molecule>
    <subcellularLocation>
        <location evidence="10">Host membrane</location>
        <topology evidence="10">Multi-pass membrane protein</topology>
    </subcellularLocation>
</comment>
<comment type="subcellular location">
    <molecule>Serine protease NS3</molecule>
    <subcellularLocation>
        <location evidence="3">Host cytoplasm</location>
    </subcellularLocation>
</comment>
<comment type="subcellular location">
    <molecule>Non-structural protein 4B</molecule>
    <subcellularLocation>
        <location evidence="3">Host cytoplasm</location>
    </subcellularLocation>
</comment>
<comment type="subcellular location">
    <molecule>Non-structural protein 5A</molecule>
    <subcellularLocation>
        <location evidence="3">Host cytoplasm</location>
    </subcellularLocation>
</comment>
<comment type="induction">
    <text evidence="16">Translated cap independently from an internal ribosome entry site (IRES).</text>
</comment>
<comment type="domain">
    <molecule>N-terminal protease</molecule>
    <text evidence="3">Contains a zinc-binding TRASH region (By similarity). This region is required for binding host IRF3 and inducing its proteasomal degradation (By similarity).</text>
</comment>
<comment type="PTM">
    <molecule>E(rns) glycoprotein</molecule>
    <text evidence="3">Heavily glycosylated.</text>
</comment>
<comment type="PTM">
    <text evidence="3">The viral RNA of pestiviruses is expressed as a single polyprotein which undergoes post-translational proteolytic processing resulting in the production of at least eleven individual proteins. The N-terminal protease cleaves itself from the nascent polyprotein autocatalytically and thereby generates the N-terminus of the adjacent viral capsid protein C.</text>
</comment>
<comment type="PTM">
    <molecule>Genome polyprotein</molecule>
    <text>Cleavage between E2 and p7 is partial.</text>
</comment>
<comment type="similarity">
    <text evidence="20">Belongs to the pestivirus polyprotein family.</text>
</comment>